<organism>
    <name type="scientific">Conus arenatus</name>
    <name type="common">Sand-dusted cone</name>
    <dbReference type="NCBI Taxonomy" id="89451"/>
    <lineage>
        <taxon>Eukaryota</taxon>
        <taxon>Metazoa</taxon>
        <taxon>Spiralia</taxon>
        <taxon>Lophotrochozoa</taxon>
        <taxon>Mollusca</taxon>
        <taxon>Gastropoda</taxon>
        <taxon>Caenogastropoda</taxon>
        <taxon>Neogastropoda</taxon>
        <taxon>Conoidea</taxon>
        <taxon>Conidae</taxon>
        <taxon>Conus</taxon>
    </lineage>
</organism>
<reference key="1">
    <citation type="journal article" date="2001" name="Mol. Biol. Evol.">
        <title>Mechanisms for evolving hypervariability: the case of conopeptides.</title>
        <authorList>
            <person name="Conticello S.G."/>
            <person name="Gilad Y."/>
            <person name="Avidan N."/>
            <person name="Ben-Asher E."/>
            <person name="Levy Z."/>
            <person name="Fainzilber M."/>
        </authorList>
    </citation>
    <scope>NUCLEOTIDE SEQUENCE [MRNA]</scope>
    <source>
        <tissue>Venom duct</tissue>
    </source>
</reference>
<dbReference type="EMBL" id="AF215107">
    <property type="protein sequence ID" value="AAG60528.1"/>
    <property type="molecule type" value="mRNA"/>
</dbReference>
<dbReference type="SMR" id="Q9BP50"/>
<dbReference type="ConoServer" id="785">
    <property type="toxin name" value="Ar6.28 precursor"/>
</dbReference>
<dbReference type="GO" id="GO:0005576">
    <property type="term" value="C:extracellular region"/>
    <property type="evidence" value="ECO:0007669"/>
    <property type="project" value="UniProtKB-SubCell"/>
</dbReference>
<dbReference type="GO" id="GO:0090729">
    <property type="term" value="F:toxin activity"/>
    <property type="evidence" value="ECO:0007669"/>
    <property type="project" value="UniProtKB-KW"/>
</dbReference>
<sequence>RRSLTRRVPEECEESCEEEEKTCCGLENGQPFCSRICWG</sequence>
<protein>
    <recommendedName>
        <fullName>Conotoxin ArMSGL-013</fullName>
    </recommendedName>
</protein>
<accession>Q9BP50</accession>
<evidence type="ECO:0000250" key="1"/>
<evidence type="ECO:0000305" key="2"/>
<feature type="propeptide" id="PRO_0000404860">
    <location>
        <begin position="1" status="less than"/>
        <end position="5"/>
    </location>
</feature>
<feature type="peptide" id="PRO_0000404861" description="Conotoxin ArMSGL-013">
    <location>
        <begin position="8"/>
        <end position="38"/>
    </location>
</feature>
<feature type="modified residue" description="Tryptophan amide" evidence="1">
    <location>
        <position position="38"/>
    </location>
</feature>
<feature type="disulfide bond" evidence="1">
    <location>
        <begin position="12"/>
        <end position="24"/>
    </location>
</feature>
<feature type="disulfide bond" evidence="1">
    <location>
        <begin position="16"/>
        <end position="33"/>
    </location>
</feature>
<feature type="disulfide bond" evidence="1">
    <location>
        <begin position="23"/>
        <end position="37"/>
    </location>
</feature>
<feature type="non-terminal residue">
    <location>
        <position position="1"/>
    </location>
</feature>
<comment type="subcellular location">
    <subcellularLocation>
        <location evidence="1">Secreted</location>
    </subcellularLocation>
</comment>
<comment type="tissue specificity">
    <text evidence="2">Expressed by the venom duct.</text>
</comment>
<comment type="domain">
    <text evidence="1">The presence of a 'disulfide through disulfide knot' structurally defines this protein as a knottin.</text>
</comment>
<comment type="domain">
    <text>The cysteine framework is VI/VII (C-C-CC-C-C).</text>
</comment>
<comment type="similarity">
    <text evidence="2">Belongs to the conotoxin O3 superfamily.</text>
</comment>
<name>O3628_CONAE</name>
<keyword id="KW-0027">Amidation</keyword>
<keyword id="KW-0165">Cleavage on pair of basic residues</keyword>
<keyword id="KW-1015">Disulfide bond</keyword>
<keyword id="KW-0960">Knottin</keyword>
<keyword id="KW-0528">Neurotoxin</keyword>
<keyword id="KW-0964">Secreted</keyword>
<keyword id="KW-0800">Toxin</keyword>
<proteinExistence type="evidence at transcript level"/>